<dbReference type="EC" id="2.3.2.6" evidence="1"/>
<dbReference type="EMBL" id="CP000932">
    <property type="protein sequence ID" value="ACM64386.1"/>
    <property type="molecule type" value="Genomic_DNA"/>
</dbReference>
<dbReference type="RefSeq" id="WP_012661769.1">
    <property type="nucleotide sequence ID" value="NC_012039.1"/>
</dbReference>
<dbReference type="SMR" id="B9KCU7"/>
<dbReference type="STRING" id="306263.Cla_1064"/>
<dbReference type="KEGG" id="cla:CLA_1064"/>
<dbReference type="PATRIC" id="fig|306263.5.peg.1048"/>
<dbReference type="eggNOG" id="COG2360">
    <property type="taxonomic scope" value="Bacteria"/>
</dbReference>
<dbReference type="HOGENOM" id="CLU_075045_0_1_7"/>
<dbReference type="Proteomes" id="UP000007727">
    <property type="component" value="Chromosome"/>
</dbReference>
<dbReference type="GO" id="GO:0005737">
    <property type="term" value="C:cytoplasm"/>
    <property type="evidence" value="ECO:0007669"/>
    <property type="project" value="UniProtKB-SubCell"/>
</dbReference>
<dbReference type="GO" id="GO:0008914">
    <property type="term" value="F:leucyl-tRNA--protein transferase activity"/>
    <property type="evidence" value="ECO:0007669"/>
    <property type="project" value="UniProtKB-UniRule"/>
</dbReference>
<dbReference type="GO" id="GO:0030163">
    <property type="term" value="P:protein catabolic process"/>
    <property type="evidence" value="ECO:0007669"/>
    <property type="project" value="UniProtKB-UniRule"/>
</dbReference>
<dbReference type="Gene3D" id="3.40.630.70">
    <property type="entry name" value="Leucyl/phenylalanyl-tRNA-protein transferase, C-terminal domain"/>
    <property type="match status" value="1"/>
</dbReference>
<dbReference type="Gene3D" id="3.30.70.3550">
    <property type="entry name" value="Leucyl/phenylalanyl-tRNA-protein transferase, N-terminal domain"/>
    <property type="match status" value="1"/>
</dbReference>
<dbReference type="HAMAP" id="MF_00688">
    <property type="entry name" value="Leu_Phe_trans"/>
    <property type="match status" value="1"/>
</dbReference>
<dbReference type="InterPro" id="IPR016181">
    <property type="entry name" value="Acyl_CoA_acyltransferase"/>
</dbReference>
<dbReference type="InterPro" id="IPR004616">
    <property type="entry name" value="Leu/Phe-tRNA_Trfase"/>
</dbReference>
<dbReference type="InterPro" id="IPR042203">
    <property type="entry name" value="Leu/Phe-tRNA_Trfase_C"/>
</dbReference>
<dbReference type="InterPro" id="IPR042221">
    <property type="entry name" value="Leu/Phe-tRNA_Trfase_N"/>
</dbReference>
<dbReference type="NCBIfam" id="TIGR00667">
    <property type="entry name" value="aat"/>
    <property type="match status" value="1"/>
</dbReference>
<dbReference type="PANTHER" id="PTHR30098">
    <property type="entry name" value="LEUCYL/PHENYLALANYL-TRNA--PROTEIN TRANSFERASE"/>
    <property type="match status" value="1"/>
</dbReference>
<dbReference type="PANTHER" id="PTHR30098:SF2">
    <property type="entry name" value="LEUCYL_PHENYLALANYL-TRNA--PROTEIN TRANSFERASE"/>
    <property type="match status" value="1"/>
</dbReference>
<dbReference type="Pfam" id="PF03588">
    <property type="entry name" value="Leu_Phe_trans"/>
    <property type="match status" value="1"/>
</dbReference>
<dbReference type="SUPFAM" id="SSF55729">
    <property type="entry name" value="Acyl-CoA N-acyltransferases (Nat)"/>
    <property type="match status" value="1"/>
</dbReference>
<comment type="function">
    <text evidence="1">Functions in the N-end rule pathway of protein degradation where it conjugates Leu, Phe and, less efficiently, Met from aminoacyl-tRNAs to the N-termini of proteins containing an N-terminal arginine or lysine.</text>
</comment>
<comment type="catalytic activity">
    <reaction evidence="1">
        <text>N-terminal L-lysyl-[protein] + L-leucyl-tRNA(Leu) = N-terminal L-leucyl-L-lysyl-[protein] + tRNA(Leu) + H(+)</text>
        <dbReference type="Rhea" id="RHEA:12340"/>
        <dbReference type="Rhea" id="RHEA-COMP:9613"/>
        <dbReference type="Rhea" id="RHEA-COMP:9622"/>
        <dbReference type="Rhea" id="RHEA-COMP:12670"/>
        <dbReference type="Rhea" id="RHEA-COMP:12671"/>
        <dbReference type="ChEBI" id="CHEBI:15378"/>
        <dbReference type="ChEBI" id="CHEBI:65249"/>
        <dbReference type="ChEBI" id="CHEBI:78442"/>
        <dbReference type="ChEBI" id="CHEBI:78494"/>
        <dbReference type="ChEBI" id="CHEBI:133043"/>
        <dbReference type="EC" id="2.3.2.6"/>
    </reaction>
</comment>
<comment type="catalytic activity">
    <reaction evidence="1">
        <text>N-terminal L-arginyl-[protein] + L-leucyl-tRNA(Leu) = N-terminal L-leucyl-L-arginyl-[protein] + tRNA(Leu) + H(+)</text>
        <dbReference type="Rhea" id="RHEA:50416"/>
        <dbReference type="Rhea" id="RHEA-COMP:9613"/>
        <dbReference type="Rhea" id="RHEA-COMP:9622"/>
        <dbReference type="Rhea" id="RHEA-COMP:12672"/>
        <dbReference type="Rhea" id="RHEA-COMP:12673"/>
        <dbReference type="ChEBI" id="CHEBI:15378"/>
        <dbReference type="ChEBI" id="CHEBI:64719"/>
        <dbReference type="ChEBI" id="CHEBI:78442"/>
        <dbReference type="ChEBI" id="CHEBI:78494"/>
        <dbReference type="ChEBI" id="CHEBI:133044"/>
        <dbReference type="EC" id="2.3.2.6"/>
    </reaction>
</comment>
<comment type="catalytic activity">
    <reaction evidence="1">
        <text>L-phenylalanyl-tRNA(Phe) + an N-terminal L-alpha-aminoacyl-[protein] = an N-terminal L-phenylalanyl-L-alpha-aminoacyl-[protein] + tRNA(Phe)</text>
        <dbReference type="Rhea" id="RHEA:43632"/>
        <dbReference type="Rhea" id="RHEA-COMP:9668"/>
        <dbReference type="Rhea" id="RHEA-COMP:9699"/>
        <dbReference type="Rhea" id="RHEA-COMP:10636"/>
        <dbReference type="Rhea" id="RHEA-COMP:10637"/>
        <dbReference type="ChEBI" id="CHEBI:78442"/>
        <dbReference type="ChEBI" id="CHEBI:78531"/>
        <dbReference type="ChEBI" id="CHEBI:78597"/>
        <dbReference type="ChEBI" id="CHEBI:83561"/>
        <dbReference type="EC" id="2.3.2.6"/>
    </reaction>
</comment>
<comment type="subcellular location">
    <subcellularLocation>
        <location evidence="1">Cytoplasm</location>
    </subcellularLocation>
</comment>
<comment type="similarity">
    <text evidence="1">Belongs to the L/F-transferase family.</text>
</comment>
<name>LFTR_CAMLR</name>
<keyword id="KW-0012">Acyltransferase</keyword>
<keyword id="KW-0963">Cytoplasm</keyword>
<keyword id="KW-1185">Reference proteome</keyword>
<keyword id="KW-0808">Transferase</keyword>
<feature type="chain" id="PRO_1000147787" description="Leucyl/phenylalanyl-tRNA--protein transferase">
    <location>
        <begin position="1"/>
        <end position="213"/>
    </location>
</feature>
<sequence>MQKSNLYSKLLKSPDDAPVFISEKLELDFISHAYSLGLFPWTSNPVTWWCPSPRMVLFPDEIHIQKSIKKALKTYEIRLDYDFALLIKHCSLRKKTWINQEFIETYTKLFEQNLAHSVEVYENDEFIGGLYGLIIGKVFFGESMISLKKDASKIALIKLCEILKPYDFLIDCQVPNEHLKFMGAKEMIKKDFLKILEKKVSLESGFENFQNLL</sequence>
<protein>
    <recommendedName>
        <fullName evidence="1">Leucyl/phenylalanyl-tRNA--protein transferase</fullName>
        <ecNumber evidence="1">2.3.2.6</ecNumber>
    </recommendedName>
    <alternativeName>
        <fullName evidence="1">L/F-transferase</fullName>
    </alternativeName>
    <alternativeName>
        <fullName evidence="1">Leucyltransferase</fullName>
    </alternativeName>
    <alternativeName>
        <fullName evidence="1">Phenyalanyltransferase</fullName>
    </alternativeName>
</protein>
<organism>
    <name type="scientific">Campylobacter lari (strain RM2100 / D67 / ATCC BAA-1060)</name>
    <dbReference type="NCBI Taxonomy" id="306263"/>
    <lineage>
        <taxon>Bacteria</taxon>
        <taxon>Pseudomonadati</taxon>
        <taxon>Campylobacterota</taxon>
        <taxon>Epsilonproteobacteria</taxon>
        <taxon>Campylobacterales</taxon>
        <taxon>Campylobacteraceae</taxon>
        <taxon>Campylobacter</taxon>
    </lineage>
</organism>
<evidence type="ECO:0000255" key="1">
    <source>
        <dbReference type="HAMAP-Rule" id="MF_00688"/>
    </source>
</evidence>
<accession>B9KCU7</accession>
<gene>
    <name evidence="1" type="primary">aat</name>
    <name type="ordered locus">Cla_1064</name>
</gene>
<reference key="1">
    <citation type="journal article" date="2008" name="Foodborne Pathog. Dis.">
        <title>The complete genome sequence and analysis of the human pathogen Campylobacter lari.</title>
        <authorList>
            <person name="Miller W.G."/>
            <person name="Wang G."/>
            <person name="Binnewies T.T."/>
            <person name="Parker C.T."/>
        </authorList>
    </citation>
    <scope>NUCLEOTIDE SEQUENCE [LARGE SCALE GENOMIC DNA]</scope>
    <source>
        <strain>RM2100 / D67 / ATCC BAA-1060</strain>
    </source>
</reference>
<proteinExistence type="inferred from homology"/>